<accession>Q6BJW8</accession>
<keyword id="KW-0238">DNA-binding</keyword>
<keyword id="KW-0479">Metal-binding</keyword>
<keyword id="KW-0539">Nucleus</keyword>
<keyword id="KW-1185">Reference proteome</keyword>
<keyword id="KW-0804">Transcription</keyword>
<keyword id="KW-0805">Transcription regulation</keyword>
<keyword id="KW-0862">Zinc</keyword>
<sequence length="544" mass="61868">MTKKLSPLEKKNRKPASKACVFCHSKHLQCSNERPCKNCMKRNLGDQCHDAIRKRAKYLNTSGVKKMKSRTNSISSSYRSPSVSESPQNPYTHSIIKQEPDLNMRGELQSIQQENTSHNQPGPSNVSHYVDQRPTIPTNTMLDTTNDVLNKLLYSEPIHSDSISLRDSISEQPEMDSNRRSIDTMFNSNYLNQEYLMLGDIILHSKPSSPSPSNTSASEYNGDATISPANTLLNNTRLDFDNSNDHMSNSKRKLNKLKDSRPFIALGVSNDVPISLQPEGTLSLDNLSTKNEIMNKDNISSNSLKTDYVSPLISHHIYQSVQDIYMHSIPNFDYPQSYHSLTNFLKRRFSGNSLAHDQRQAKRNNLLIILKLIASYRPTFISAHKNLLKPYDLLFLEMSFQRSLIDYEKLLLFNSSPSIIWRRTGEIVSISNDLLSILGFNLSEILSKRTFIMELMYDDESIINYFKLFKSVAVGNLHSSIITKCKLMKNSSAAFHNEASDVADREYIEFCSAWTVKRDPFDIPMLIIGQFLPILPGGEGVRKY</sequence>
<feature type="chain" id="PRO_0000406485" description="Glucose starvation modulator protein 1">
    <location>
        <begin position="1"/>
        <end position="544"/>
    </location>
</feature>
<feature type="domain" description="PAS">
    <location>
        <begin position="403"/>
        <end position="475"/>
    </location>
</feature>
<feature type="DNA-binding region" description="Zn(2)-C6 fungal-type" evidence="2">
    <location>
        <begin position="20"/>
        <end position="48"/>
    </location>
</feature>
<feature type="region of interest" description="Disordered" evidence="3">
    <location>
        <begin position="65"/>
        <end position="93"/>
    </location>
</feature>
<feature type="compositionally biased region" description="Low complexity" evidence="3">
    <location>
        <begin position="70"/>
        <end position="86"/>
    </location>
</feature>
<organism>
    <name type="scientific">Debaryomyces hansenii (strain ATCC 36239 / CBS 767 / BCRC 21394 / JCM 1990 / NBRC 0083 / IGC 2968)</name>
    <name type="common">Yeast</name>
    <name type="synonym">Torulaspora hansenii</name>
    <dbReference type="NCBI Taxonomy" id="284592"/>
    <lineage>
        <taxon>Eukaryota</taxon>
        <taxon>Fungi</taxon>
        <taxon>Dikarya</taxon>
        <taxon>Ascomycota</taxon>
        <taxon>Saccharomycotina</taxon>
        <taxon>Pichiomycetes</taxon>
        <taxon>Debaryomycetaceae</taxon>
        <taxon>Debaryomyces</taxon>
    </lineage>
</organism>
<comment type="function">
    <text evidence="1">Transcription factor which regulates nonfermentable carbon utilization.</text>
</comment>
<comment type="subcellular location">
    <subcellularLocation>
        <location evidence="2">Nucleus</location>
    </subcellularLocation>
</comment>
<comment type="similarity">
    <text evidence="4">Belongs to the ERT1/acuK family.</text>
</comment>
<dbReference type="EMBL" id="CR382138">
    <property type="protein sequence ID" value="CAG89929.2"/>
    <property type="molecule type" value="Genomic_DNA"/>
</dbReference>
<dbReference type="RefSeq" id="XP_461503.2">
    <property type="nucleotide sequence ID" value="XM_461503.1"/>
</dbReference>
<dbReference type="FunCoup" id="Q6BJW8">
    <property type="interactions" value="182"/>
</dbReference>
<dbReference type="GeneID" id="2903685"/>
<dbReference type="KEGG" id="dha:DEHA2F26774g"/>
<dbReference type="VEuPathDB" id="FungiDB:DEHA2F26774g"/>
<dbReference type="eggNOG" id="ENOG502R2ZP">
    <property type="taxonomic scope" value="Eukaryota"/>
</dbReference>
<dbReference type="HOGENOM" id="CLU_010748_2_2_1"/>
<dbReference type="InParanoid" id="Q6BJW8"/>
<dbReference type="OMA" id="FCHEKHL"/>
<dbReference type="OrthoDB" id="2538135at2759"/>
<dbReference type="Proteomes" id="UP000000599">
    <property type="component" value="Chromosome F"/>
</dbReference>
<dbReference type="GO" id="GO:0005634">
    <property type="term" value="C:nucleus"/>
    <property type="evidence" value="ECO:0007669"/>
    <property type="project" value="UniProtKB-SubCell"/>
</dbReference>
<dbReference type="GO" id="GO:0000981">
    <property type="term" value="F:DNA-binding transcription factor activity, RNA polymerase II-specific"/>
    <property type="evidence" value="ECO:0007669"/>
    <property type="project" value="InterPro"/>
</dbReference>
<dbReference type="GO" id="GO:0000977">
    <property type="term" value="F:RNA polymerase II transcription regulatory region sequence-specific DNA binding"/>
    <property type="evidence" value="ECO:0007669"/>
    <property type="project" value="TreeGrafter"/>
</dbReference>
<dbReference type="GO" id="GO:0008270">
    <property type="term" value="F:zinc ion binding"/>
    <property type="evidence" value="ECO:0007669"/>
    <property type="project" value="InterPro"/>
</dbReference>
<dbReference type="GO" id="GO:0009267">
    <property type="term" value="P:cellular response to starvation"/>
    <property type="evidence" value="ECO:0007669"/>
    <property type="project" value="TreeGrafter"/>
</dbReference>
<dbReference type="CDD" id="cd00067">
    <property type="entry name" value="GAL4"/>
    <property type="match status" value="1"/>
</dbReference>
<dbReference type="Gene3D" id="4.10.240.10">
    <property type="entry name" value="Zn(2)-C6 fungal-type DNA-binding domain"/>
    <property type="match status" value="1"/>
</dbReference>
<dbReference type="InterPro" id="IPR050335">
    <property type="entry name" value="ERT1_acuK_gluconeogen_tf"/>
</dbReference>
<dbReference type="InterPro" id="IPR056751">
    <property type="entry name" value="PAS_13"/>
</dbReference>
<dbReference type="InterPro" id="IPR036864">
    <property type="entry name" value="Zn2-C6_fun-type_DNA-bd_sf"/>
</dbReference>
<dbReference type="InterPro" id="IPR001138">
    <property type="entry name" value="Zn2Cys6_DnaBD"/>
</dbReference>
<dbReference type="PANTHER" id="PTHR47659:SF8">
    <property type="entry name" value="GLUCOSE STARVATION MODULATOR PROTEIN 1"/>
    <property type="match status" value="1"/>
</dbReference>
<dbReference type="PANTHER" id="PTHR47659">
    <property type="entry name" value="ZN(II)2CYS6 TRANSCRIPTION FACTOR (EUROFUNG)-RELATED"/>
    <property type="match status" value="1"/>
</dbReference>
<dbReference type="Pfam" id="PF24990">
    <property type="entry name" value="PAS_13"/>
    <property type="match status" value="1"/>
</dbReference>
<dbReference type="Pfam" id="PF00172">
    <property type="entry name" value="Zn_clus"/>
    <property type="match status" value="1"/>
</dbReference>
<dbReference type="SMART" id="SM00066">
    <property type="entry name" value="GAL4"/>
    <property type="match status" value="1"/>
</dbReference>
<dbReference type="SUPFAM" id="SSF57701">
    <property type="entry name" value="Zn2/Cys6 DNA-binding domain"/>
    <property type="match status" value="1"/>
</dbReference>
<dbReference type="PROSITE" id="PS00463">
    <property type="entry name" value="ZN2_CY6_FUNGAL_1"/>
    <property type="match status" value="1"/>
</dbReference>
<dbReference type="PROSITE" id="PS50048">
    <property type="entry name" value="ZN2_CY6_FUNGAL_2"/>
    <property type="match status" value="1"/>
</dbReference>
<gene>
    <name type="primary">GSM1</name>
    <name type="ordered locus">DEHA2F26774g</name>
</gene>
<evidence type="ECO:0000250" key="1"/>
<evidence type="ECO:0000255" key="2">
    <source>
        <dbReference type="PROSITE-ProRule" id="PRU00227"/>
    </source>
</evidence>
<evidence type="ECO:0000256" key="3">
    <source>
        <dbReference type="SAM" id="MobiDB-lite"/>
    </source>
</evidence>
<evidence type="ECO:0000305" key="4"/>
<name>GSM1_DEBHA</name>
<proteinExistence type="inferred from homology"/>
<reference key="1">
    <citation type="journal article" date="2004" name="Nature">
        <title>Genome evolution in yeasts.</title>
        <authorList>
            <person name="Dujon B."/>
            <person name="Sherman D."/>
            <person name="Fischer G."/>
            <person name="Durrens P."/>
            <person name="Casaregola S."/>
            <person name="Lafontaine I."/>
            <person name="de Montigny J."/>
            <person name="Marck C."/>
            <person name="Neuveglise C."/>
            <person name="Talla E."/>
            <person name="Goffard N."/>
            <person name="Frangeul L."/>
            <person name="Aigle M."/>
            <person name="Anthouard V."/>
            <person name="Babour A."/>
            <person name="Barbe V."/>
            <person name="Barnay S."/>
            <person name="Blanchin S."/>
            <person name="Beckerich J.-M."/>
            <person name="Beyne E."/>
            <person name="Bleykasten C."/>
            <person name="Boisrame A."/>
            <person name="Boyer J."/>
            <person name="Cattolico L."/>
            <person name="Confanioleri F."/>
            <person name="de Daruvar A."/>
            <person name="Despons L."/>
            <person name="Fabre E."/>
            <person name="Fairhead C."/>
            <person name="Ferry-Dumazet H."/>
            <person name="Groppi A."/>
            <person name="Hantraye F."/>
            <person name="Hennequin C."/>
            <person name="Jauniaux N."/>
            <person name="Joyet P."/>
            <person name="Kachouri R."/>
            <person name="Kerrest A."/>
            <person name="Koszul R."/>
            <person name="Lemaire M."/>
            <person name="Lesur I."/>
            <person name="Ma L."/>
            <person name="Muller H."/>
            <person name="Nicaud J.-M."/>
            <person name="Nikolski M."/>
            <person name="Oztas S."/>
            <person name="Ozier-Kalogeropoulos O."/>
            <person name="Pellenz S."/>
            <person name="Potier S."/>
            <person name="Richard G.-F."/>
            <person name="Straub M.-L."/>
            <person name="Suleau A."/>
            <person name="Swennen D."/>
            <person name="Tekaia F."/>
            <person name="Wesolowski-Louvel M."/>
            <person name="Westhof E."/>
            <person name="Wirth B."/>
            <person name="Zeniou-Meyer M."/>
            <person name="Zivanovic Y."/>
            <person name="Bolotin-Fukuhara M."/>
            <person name="Thierry A."/>
            <person name="Bouchier C."/>
            <person name="Caudron B."/>
            <person name="Scarpelli C."/>
            <person name="Gaillardin C."/>
            <person name="Weissenbach J."/>
            <person name="Wincker P."/>
            <person name="Souciet J.-L."/>
        </authorList>
    </citation>
    <scope>NUCLEOTIDE SEQUENCE [LARGE SCALE GENOMIC DNA]</scope>
    <source>
        <strain>ATCC 36239 / CBS 767 / BCRC 21394 / JCM 1990 / NBRC 0083 / IGC 2968</strain>
    </source>
</reference>
<protein>
    <recommendedName>
        <fullName>Glucose starvation modulator protein 1</fullName>
    </recommendedName>
</protein>